<evidence type="ECO:0000305" key="1"/>
<evidence type="ECO:0007829" key="2">
    <source>
        <dbReference type="PDB" id="3BID"/>
    </source>
</evidence>
<organism>
    <name type="scientific">Neisseria meningitidis serogroup B (strain ATCC BAA-335 / MC58)</name>
    <dbReference type="NCBI Taxonomy" id="122586"/>
    <lineage>
        <taxon>Bacteria</taxon>
        <taxon>Pseudomonadati</taxon>
        <taxon>Pseudomonadota</taxon>
        <taxon>Betaproteobacteria</taxon>
        <taxon>Neisseriales</taxon>
        <taxon>Neisseriaceae</taxon>
        <taxon>Neisseria</taxon>
    </lineage>
</organism>
<name>Y1088_NEIMB</name>
<protein>
    <recommendedName>
        <fullName>UPF0339 protein NMB1088</fullName>
    </recommendedName>
</protein>
<feature type="chain" id="PRO_0000218140" description="UPF0339 protein NMB1088">
    <location>
        <begin position="1"/>
        <end position="56"/>
    </location>
</feature>
<feature type="strand" evidence="2">
    <location>
        <begin position="2"/>
        <end position="7"/>
    </location>
</feature>
<feature type="strand" evidence="2">
    <location>
        <begin position="13"/>
        <end position="18"/>
    </location>
</feature>
<feature type="strand" evidence="2">
    <location>
        <begin position="24"/>
        <end position="27"/>
    </location>
</feature>
<feature type="helix" evidence="2">
    <location>
        <begin position="34"/>
        <end position="45"/>
    </location>
</feature>
<feature type="strand" evidence="2">
    <location>
        <begin position="53"/>
        <end position="55"/>
    </location>
</feature>
<dbReference type="EMBL" id="AE002098">
    <property type="protein sequence ID" value="AAF41480.1"/>
    <property type="molecule type" value="Genomic_DNA"/>
</dbReference>
<dbReference type="RefSeq" id="NP_274120.1">
    <property type="nucleotide sequence ID" value="NC_003112.2"/>
</dbReference>
<dbReference type="RefSeq" id="WP_002215844.1">
    <property type="nucleotide sequence ID" value="NC_003112.2"/>
</dbReference>
<dbReference type="PDB" id="3BID">
    <property type="method" value="X-ray"/>
    <property type="resolution" value="2.70 A"/>
    <property type="chains" value="A/B/C/D/E/F/G/H=1-56"/>
</dbReference>
<dbReference type="PDBsum" id="3BID"/>
<dbReference type="SMR" id="Q7DDI1"/>
<dbReference type="STRING" id="122586.NMB1088"/>
<dbReference type="PaxDb" id="122586-NMB1088"/>
<dbReference type="KEGG" id="nme:NMB1088"/>
<dbReference type="PATRIC" id="fig|122586.8.peg.1385"/>
<dbReference type="HOGENOM" id="CLU_163886_3_1_4"/>
<dbReference type="InParanoid" id="Q7DDI1"/>
<dbReference type="OrthoDB" id="9802792at2"/>
<dbReference type="EvolutionaryTrace" id="Q7DDI1"/>
<dbReference type="Proteomes" id="UP000000425">
    <property type="component" value="Chromosome"/>
</dbReference>
<dbReference type="Gene3D" id="3.30.160.160">
    <property type="entry name" value="YegP-like"/>
    <property type="match status" value="1"/>
</dbReference>
<dbReference type="InterPro" id="IPR010879">
    <property type="entry name" value="DUF1508"/>
</dbReference>
<dbReference type="InterPro" id="IPR036913">
    <property type="entry name" value="YegP-like_sf"/>
</dbReference>
<dbReference type="Pfam" id="PF07411">
    <property type="entry name" value="DUF1508"/>
    <property type="match status" value="1"/>
</dbReference>
<dbReference type="SUPFAM" id="SSF160113">
    <property type="entry name" value="YegP-like"/>
    <property type="match status" value="1"/>
</dbReference>
<gene>
    <name type="ordered locus">NMB1088</name>
</gene>
<reference key="1">
    <citation type="journal article" date="2000" name="Science">
        <title>Complete genome sequence of Neisseria meningitidis serogroup B strain MC58.</title>
        <authorList>
            <person name="Tettelin H."/>
            <person name="Saunders N.J."/>
            <person name="Heidelberg J.F."/>
            <person name="Jeffries A.C."/>
            <person name="Nelson K.E."/>
            <person name="Eisen J.A."/>
            <person name="Ketchum K.A."/>
            <person name="Hood D.W."/>
            <person name="Peden J.F."/>
            <person name="Dodson R.J."/>
            <person name="Nelson W.C."/>
            <person name="Gwinn M.L."/>
            <person name="DeBoy R.T."/>
            <person name="Peterson J.D."/>
            <person name="Hickey E.K."/>
            <person name="Haft D.H."/>
            <person name="Salzberg S.L."/>
            <person name="White O."/>
            <person name="Fleischmann R.D."/>
            <person name="Dougherty B.A."/>
            <person name="Mason T.M."/>
            <person name="Ciecko A."/>
            <person name="Parksey D.S."/>
            <person name="Blair E."/>
            <person name="Cittone H."/>
            <person name="Clark E.B."/>
            <person name="Cotton M.D."/>
            <person name="Utterback T.R."/>
            <person name="Khouri H.M."/>
            <person name="Qin H."/>
            <person name="Vamathevan J.J."/>
            <person name="Gill J."/>
            <person name="Scarlato V."/>
            <person name="Masignani V."/>
            <person name="Pizza M."/>
            <person name="Grandi G."/>
            <person name="Sun L."/>
            <person name="Smith H.O."/>
            <person name="Fraser C.M."/>
            <person name="Moxon E.R."/>
            <person name="Rappuoli R."/>
            <person name="Venter J.C."/>
        </authorList>
    </citation>
    <scope>NUCLEOTIDE SEQUENCE [LARGE SCALE GENOMIC DNA]</scope>
    <source>
        <strain>ATCC BAA-335 / MC58</strain>
    </source>
</reference>
<keyword id="KW-0002">3D-structure</keyword>
<keyword id="KW-1185">Reference proteome</keyword>
<sequence>MYFEIYKDAKGEYRWRLKAANHEIIAQGEGYTSKQNCQHAVDLLKSTTAATPVKEV</sequence>
<accession>Q7DDI1</accession>
<proteinExistence type="evidence at protein level"/>
<comment type="similarity">
    <text evidence="1">Belongs to the UPF0339 family.</text>
</comment>